<sequence length="176" mass="19737">MAITGIFFGSDTGNTENIAKMIQKQLGKDVADVHDIAKSSKEDLEAYDILLLGIPTWYYGEAQCDWDDFFPTLEEIDFNGKLVALFGCGDQEDYAEYFCDALGTIRDIIEPRGATIVGHWPTAGYHFEASKGLADDDHFVGLAIDEDRQPELTAERVEKWVKQISEELHLDEILNA</sequence>
<protein>
    <recommendedName>
        <fullName>Flavodoxin 1</fullName>
    </recommendedName>
    <alternativeName>
        <fullName>Flavodoxin A</fullName>
    </alternativeName>
</protein>
<name>FLAV_ECOLI</name>
<reference key="1">
    <citation type="journal article" date="1991" name="J. Bacteriol.">
        <title>Isolation, cloning, mapping, and nucleotide sequencing of the gene encoding flavodoxin in Escherichia coli.</title>
        <authorList>
            <person name="Osborne C."/>
            <person name="Chen L.-M."/>
            <person name="Matthews R.G."/>
        </authorList>
    </citation>
    <scope>NUCLEOTIDE SEQUENCE [GENOMIC DNA]</scope>
    <scope>PROTEIN SEQUENCE OF 2-15</scope>
</reference>
<reference key="2">
    <citation type="journal article" date="1996" name="DNA Res.">
        <title>A 718-kb DNA sequence of the Escherichia coli K-12 genome corresponding to the 12.7-28.0 min region on the linkage map.</title>
        <authorList>
            <person name="Oshima T."/>
            <person name="Aiba H."/>
            <person name="Baba T."/>
            <person name="Fujita K."/>
            <person name="Hayashi K."/>
            <person name="Honjo A."/>
            <person name="Ikemoto K."/>
            <person name="Inada T."/>
            <person name="Itoh T."/>
            <person name="Kajihara M."/>
            <person name="Kanai K."/>
            <person name="Kashimoto K."/>
            <person name="Kimura S."/>
            <person name="Kitagawa M."/>
            <person name="Makino K."/>
            <person name="Masuda S."/>
            <person name="Miki T."/>
            <person name="Mizobuchi K."/>
            <person name="Mori H."/>
            <person name="Motomura K."/>
            <person name="Nakamura Y."/>
            <person name="Nashimoto H."/>
            <person name="Nishio Y."/>
            <person name="Saito N."/>
            <person name="Sampei G."/>
            <person name="Seki Y."/>
            <person name="Tagami H."/>
            <person name="Takemoto K."/>
            <person name="Wada C."/>
            <person name="Yamamoto Y."/>
            <person name="Yano M."/>
            <person name="Horiuchi T."/>
        </authorList>
    </citation>
    <scope>NUCLEOTIDE SEQUENCE [LARGE SCALE GENOMIC DNA]</scope>
    <source>
        <strain>K12 / W3110 / ATCC 27325 / DSM 5911</strain>
    </source>
</reference>
<reference key="3">
    <citation type="journal article" date="1997" name="Science">
        <title>The complete genome sequence of Escherichia coli K-12.</title>
        <authorList>
            <person name="Blattner F.R."/>
            <person name="Plunkett G. III"/>
            <person name="Bloch C.A."/>
            <person name="Perna N.T."/>
            <person name="Burland V."/>
            <person name="Riley M."/>
            <person name="Collado-Vides J."/>
            <person name="Glasner J.D."/>
            <person name="Rode C.K."/>
            <person name="Mayhew G.F."/>
            <person name="Gregor J."/>
            <person name="Davis N.W."/>
            <person name="Kirkpatrick H.A."/>
            <person name="Goeden M.A."/>
            <person name="Rose D.J."/>
            <person name="Mau B."/>
            <person name="Shao Y."/>
        </authorList>
    </citation>
    <scope>NUCLEOTIDE SEQUENCE [LARGE SCALE GENOMIC DNA]</scope>
    <source>
        <strain>K12 / MG1655 / ATCC 47076</strain>
    </source>
</reference>
<reference key="4">
    <citation type="journal article" date="2006" name="Mol. Syst. Biol.">
        <title>Highly accurate genome sequences of Escherichia coli K-12 strains MG1655 and W3110.</title>
        <authorList>
            <person name="Hayashi K."/>
            <person name="Morooka N."/>
            <person name="Yamamoto Y."/>
            <person name="Fujita K."/>
            <person name="Isono K."/>
            <person name="Choi S."/>
            <person name="Ohtsubo E."/>
            <person name="Baba T."/>
            <person name="Wanner B.L."/>
            <person name="Mori H."/>
            <person name="Horiuchi T."/>
        </authorList>
    </citation>
    <scope>NUCLEOTIDE SEQUENCE [LARGE SCALE GENOMIC DNA]</scope>
    <source>
        <strain>K12 / W3110 / ATCC 27325 / DSM 5911</strain>
    </source>
</reference>
<reference key="5">
    <citation type="journal article" date="1994" name="J. Biol. Chem.">
        <title>Flavodoxin and NADPH-flavodoxin reductase from Escherichia coli support bovine cytochrome P450c17 hydroxylase activities.</title>
        <authorList>
            <person name="Jenkins C.M."/>
            <person name="Waterman M.R."/>
        </authorList>
    </citation>
    <scope>PROTEIN SEQUENCE OF 2-11</scope>
</reference>
<reference key="6">
    <citation type="journal article" date="1997" name="Electrophoresis">
        <title>Escherichia coli proteome analysis using the gene-protein database.</title>
        <authorList>
            <person name="VanBogelen R.A."/>
            <person name="Abshire K.Z."/>
            <person name="Moldover B."/>
            <person name="Olson E.R."/>
            <person name="Neidhardt F.C."/>
        </authorList>
    </citation>
    <scope>IDENTIFICATION BY 2D-GEL</scope>
</reference>
<reference key="7">
    <citation type="journal article" date="1998" name="Biochemistry">
        <title>The mechanism of adenosylmethionine-dependent activation of methionine synthase: a rapid kinetic analysis of intermediates in reductive methylation of Cob(II)alamin enzyme.</title>
        <authorList>
            <person name="Jarrett J.T."/>
            <person name="Hoover D.M."/>
            <person name="Ludwig M.L."/>
            <person name="Matthews R.G."/>
        </authorList>
    </citation>
    <scope>FUNCTION IN COBALT REDUCTION OF COB(II)ALAMIN</scope>
</reference>
<reference key="8">
    <citation type="journal article" date="1997" name="Eur. J. Biochem.">
        <title>NMR assignments, secondary structure and hydration of oxidized Escherichia coli flavodoxin.</title>
        <authorList>
            <person name="Ponstingl H."/>
            <person name="Otting G."/>
        </authorList>
    </citation>
    <scope>STRUCTURE BY NMR</scope>
</reference>
<reference evidence="8 9" key="9">
    <citation type="journal article" date="1997" name="Protein Sci.">
        <title>A flavodoxin that is required for enzyme activation: the structure of oxidized flavodoxin from Escherichia coli at 1.8-A resolution.</title>
        <authorList>
            <person name="Hoover D.M."/>
            <person name="Ludwig M.L."/>
        </authorList>
    </citation>
    <scope>X-RAY CRYSTALLOGRAPHY (1.80 ANGSTROMS) OF 2-176 IN COMPLEX WITH FMN</scope>
    <scope>COFACTOR</scope>
</reference>
<reference evidence="10" key="10">
    <citation type="journal article" date="2014" name="PLoS ONE">
        <title>Conformational dynamics of Escherichia coli flavodoxins in apo- and holo-states by solution NMR spectroscopy.</title>
        <authorList>
            <person name="Ye Q."/>
            <person name="Hu Y."/>
            <person name="Jin C."/>
        </authorList>
    </citation>
    <scope>STRUCTURE BY NMR IN COMPLEX WITH FMN</scope>
    <scope>COFACTOR</scope>
    <scope>SUBUNIT</scope>
    <scope>DOMAIN</scope>
</reference>
<organism>
    <name type="scientific">Escherichia coli (strain K12)</name>
    <dbReference type="NCBI Taxonomy" id="83333"/>
    <lineage>
        <taxon>Bacteria</taxon>
        <taxon>Pseudomonadati</taxon>
        <taxon>Pseudomonadota</taxon>
        <taxon>Gammaproteobacteria</taxon>
        <taxon>Enterobacterales</taxon>
        <taxon>Enterobacteriaceae</taxon>
        <taxon>Escherichia</taxon>
    </lineage>
</organism>
<gene>
    <name type="primary">fldA</name>
    <name type="ordered locus">b0684</name>
    <name type="ordered locus">JW0671</name>
</gene>
<proteinExistence type="evidence at protein level"/>
<keyword id="KW-0002">3D-structure</keyword>
<keyword id="KW-0903">Direct protein sequencing</keyword>
<keyword id="KW-0249">Electron transport</keyword>
<keyword id="KW-0285">Flavoprotein</keyword>
<keyword id="KW-0288">FMN</keyword>
<keyword id="KW-0547">Nucleotide-binding</keyword>
<keyword id="KW-1185">Reference proteome</keyword>
<keyword id="KW-0813">Transport</keyword>
<evidence type="ECO:0000255" key="1">
    <source>
        <dbReference type="PROSITE-ProRule" id="PRU00088"/>
    </source>
</evidence>
<evidence type="ECO:0000269" key="2">
    <source>
    </source>
</evidence>
<evidence type="ECO:0000269" key="3">
    <source>
    </source>
</evidence>
<evidence type="ECO:0000269" key="4">
    <source>
    </source>
</evidence>
<evidence type="ECO:0000269" key="5">
    <source>
    </source>
</evidence>
<evidence type="ECO:0000269" key="6">
    <source>
    </source>
</evidence>
<evidence type="ECO:0000305" key="7"/>
<evidence type="ECO:0007744" key="8">
    <source>
        <dbReference type="PDB" id="1AG9"/>
    </source>
</evidence>
<evidence type="ECO:0007744" key="9">
    <source>
        <dbReference type="PDB" id="1AHN"/>
    </source>
</evidence>
<evidence type="ECO:0007744" key="10">
    <source>
        <dbReference type="PDB" id="2MOK"/>
    </source>
</evidence>
<evidence type="ECO:0007829" key="11">
    <source>
        <dbReference type="PDB" id="1AG9"/>
    </source>
</evidence>
<evidence type="ECO:0007829" key="12">
    <source>
        <dbReference type="PDB" id="1AHN"/>
    </source>
</evidence>
<dbReference type="EMBL" id="M59426">
    <property type="protein sequence ID" value="AAA23789.1"/>
    <property type="molecule type" value="Genomic_DNA"/>
</dbReference>
<dbReference type="EMBL" id="U00096">
    <property type="protein sequence ID" value="AAC73778.1"/>
    <property type="molecule type" value="Genomic_DNA"/>
</dbReference>
<dbReference type="EMBL" id="AP009048">
    <property type="protein sequence ID" value="BAA35333.1"/>
    <property type="molecule type" value="Genomic_DNA"/>
</dbReference>
<dbReference type="PIR" id="A37319">
    <property type="entry name" value="A37319"/>
</dbReference>
<dbReference type="RefSeq" id="NP_415210.1">
    <property type="nucleotide sequence ID" value="NC_000913.3"/>
</dbReference>
<dbReference type="RefSeq" id="WP_001018618.1">
    <property type="nucleotide sequence ID" value="NZ_STEB01000044.1"/>
</dbReference>
<dbReference type="PDB" id="1AG9">
    <property type="method" value="X-ray"/>
    <property type="resolution" value="1.80 A"/>
    <property type="chains" value="A/B=2-176"/>
</dbReference>
<dbReference type="PDB" id="1AHN">
    <property type="method" value="X-ray"/>
    <property type="resolution" value="2.60 A"/>
    <property type="chains" value="A=2-176"/>
</dbReference>
<dbReference type="PDB" id="2MOK">
    <property type="method" value="NMR"/>
    <property type="chains" value="A=1-176"/>
</dbReference>
<dbReference type="PDBsum" id="1AG9"/>
<dbReference type="PDBsum" id="1AHN"/>
<dbReference type="PDBsum" id="2MOK"/>
<dbReference type="BMRB" id="P61949"/>
<dbReference type="SMR" id="P61949"/>
<dbReference type="BioGRID" id="4261909">
    <property type="interactions" value="25"/>
</dbReference>
<dbReference type="BioGRID" id="849670">
    <property type="interactions" value="11"/>
</dbReference>
<dbReference type="DIP" id="DIP-48242N"/>
<dbReference type="FunCoup" id="P61949">
    <property type="interactions" value="69"/>
</dbReference>
<dbReference type="IntAct" id="P61949">
    <property type="interactions" value="29"/>
</dbReference>
<dbReference type="STRING" id="511145.b0684"/>
<dbReference type="DrugBank" id="DB03247">
    <property type="generic name" value="Flavin mononucleotide"/>
</dbReference>
<dbReference type="jPOST" id="P61949"/>
<dbReference type="PaxDb" id="511145-b0684"/>
<dbReference type="EnsemblBacteria" id="AAC73778">
    <property type="protein sequence ID" value="AAC73778"/>
    <property type="gene ID" value="b0684"/>
</dbReference>
<dbReference type="GeneID" id="93776800"/>
<dbReference type="GeneID" id="945293"/>
<dbReference type="KEGG" id="ecj:JW0671"/>
<dbReference type="KEGG" id="eco:b0684"/>
<dbReference type="KEGG" id="ecoc:C3026_03410"/>
<dbReference type="PATRIC" id="fig|1411691.4.peg.1592"/>
<dbReference type="EchoBASE" id="EB0314"/>
<dbReference type="eggNOG" id="COG0716">
    <property type="taxonomic scope" value="Bacteria"/>
</dbReference>
<dbReference type="HOGENOM" id="CLU_051402_1_1_6"/>
<dbReference type="InParanoid" id="P61949"/>
<dbReference type="OMA" id="ICGIPTW"/>
<dbReference type="OrthoDB" id="359268at2"/>
<dbReference type="PhylomeDB" id="P61949"/>
<dbReference type="BioCyc" id="EcoCyc:FLAVODOXIN1-MONOMER"/>
<dbReference type="BioCyc" id="MetaCyc:FLAVODOXIN1-MONOMER"/>
<dbReference type="EvolutionaryTrace" id="P61949"/>
<dbReference type="PRO" id="PR:P61949"/>
<dbReference type="Proteomes" id="UP000000625">
    <property type="component" value="Chromosome"/>
</dbReference>
<dbReference type="GO" id="GO:0005737">
    <property type="term" value="C:cytoplasm"/>
    <property type="evidence" value="ECO:0000314"/>
    <property type="project" value="EcoliWiki"/>
</dbReference>
<dbReference type="GO" id="GO:0005829">
    <property type="term" value="C:cytosol"/>
    <property type="evidence" value="ECO:0000314"/>
    <property type="project" value="EcoCyc"/>
</dbReference>
<dbReference type="GO" id="GO:0009055">
    <property type="term" value="F:electron transfer activity"/>
    <property type="evidence" value="ECO:0007669"/>
    <property type="project" value="InterPro"/>
</dbReference>
<dbReference type="GO" id="GO:0010181">
    <property type="term" value="F:FMN binding"/>
    <property type="evidence" value="ECO:0007669"/>
    <property type="project" value="InterPro"/>
</dbReference>
<dbReference type="FunFam" id="3.40.50.360:FF:000002">
    <property type="entry name" value="Flavodoxin"/>
    <property type="match status" value="1"/>
</dbReference>
<dbReference type="Gene3D" id="3.40.50.360">
    <property type="match status" value="1"/>
</dbReference>
<dbReference type="InterPro" id="IPR050619">
    <property type="entry name" value="Flavodoxin"/>
</dbReference>
<dbReference type="InterPro" id="IPR008254">
    <property type="entry name" value="Flavodoxin/NO_synth"/>
</dbReference>
<dbReference type="InterPro" id="IPR001226">
    <property type="entry name" value="Flavodoxin_CS"/>
</dbReference>
<dbReference type="InterPro" id="IPR010086">
    <property type="entry name" value="Flavodoxin_lc"/>
</dbReference>
<dbReference type="InterPro" id="IPR029039">
    <property type="entry name" value="Flavoprotein-like_sf"/>
</dbReference>
<dbReference type="NCBIfam" id="TIGR01752">
    <property type="entry name" value="flav_long"/>
    <property type="match status" value="1"/>
</dbReference>
<dbReference type="NCBIfam" id="NF006735">
    <property type="entry name" value="PRK09267.1-1"/>
    <property type="match status" value="1"/>
</dbReference>
<dbReference type="NCBIfam" id="NF006736">
    <property type="entry name" value="PRK09267.1-2"/>
    <property type="match status" value="1"/>
</dbReference>
<dbReference type="NCBIfam" id="NF006737">
    <property type="entry name" value="PRK09267.1-3"/>
    <property type="match status" value="1"/>
</dbReference>
<dbReference type="NCBIfam" id="NF006739">
    <property type="entry name" value="PRK09267.1-5"/>
    <property type="match status" value="1"/>
</dbReference>
<dbReference type="PANTHER" id="PTHR42809:SF1">
    <property type="entry name" value="FLAVODOXIN 1"/>
    <property type="match status" value="1"/>
</dbReference>
<dbReference type="PANTHER" id="PTHR42809">
    <property type="entry name" value="FLAVODOXIN 2"/>
    <property type="match status" value="1"/>
</dbReference>
<dbReference type="Pfam" id="PF00258">
    <property type="entry name" value="Flavodoxin_1"/>
    <property type="match status" value="1"/>
</dbReference>
<dbReference type="PIRSF" id="PIRSF038996">
    <property type="entry name" value="FldA"/>
    <property type="match status" value="1"/>
</dbReference>
<dbReference type="SUPFAM" id="SSF52218">
    <property type="entry name" value="Flavoproteins"/>
    <property type="match status" value="1"/>
</dbReference>
<dbReference type="PROSITE" id="PS00201">
    <property type="entry name" value="FLAVODOXIN"/>
    <property type="match status" value="1"/>
</dbReference>
<dbReference type="PROSITE" id="PS50902">
    <property type="entry name" value="FLAVODOXIN_LIKE"/>
    <property type="match status" value="1"/>
</dbReference>
<comment type="function">
    <text evidence="6 7">Low-potential electron donor to a number of redox enzymes (Potential). Involved in the reactivation of inactive cob(II)alamin in methionine synthase.</text>
</comment>
<comment type="cofactor">
    <cofactor evidence="3 5">
        <name>FMN</name>
        <dbReference type="ChEBI" id="CHEBI:58210"/>
    </cofactor>
    <text evidence="3">Binds 1 FMN non-covalently.</text>
</comment>
<comment type="subunit">
    <text evidence="3">Monomer.</text>
</comment>
<comment type="interaction">
    <interactant intactId="EBI-550021">
        <id>P61949</id>
    </interactant>
    <interactant intactId="EBI-1129990">
        <id>P33596</id>
        <label>recX</label>
    </interactant>
    <organismsDiffer>false</organismsDiffer>
    <experiments>3</experiments>
</comment>
<comment type="interaction">
    <interactant intactId="EBI-550021">
        <id>P61949</id>
    </interactant>
    <interactant intactId="EBI-9142914">
        <id>P76066</id>
        <label>ydaW</label>
    </interactant>
    <organismsDiffer>false</organismsDiffer>
    <experiments>2</experiments>
</comment>
<comment type="domain">
    <text evidence="3">The structure is significantly stabilized upon cofactor binding.</text>
</comment>
<comment type="similarity">
    <text evidence="7">Belongs to the flavodoxin family.</text>
</comment>
<accession>P61949</accession>
<accession>P23243</accession>
<feature type="initiator methionine" description="Removed" evidence="2 4">
    <location>
        <position position="1"/>
    </location>
</feature>
<feature type="chain" id="PRO_0000171622" description="Flavodoxin 1">
    <location>
        <begin position="2"/>
        <end position="176"/>
    </location>
</feature>
<feature type="domain" description="Flavodoxin-like" evidence="1">
    <location>
        <begin position="4"/>
        <end position="165"/>
    </location>
</feature>
<feature type="binding site" evidence="8 9 10">
    <location>
        <begin position="10"/>
        <end position="15"/>
    </location>
    <ligand>
        <name>FMN</name>
        <dbReference type="ChEBI" id="CHEBI:58210"/>
    </ligand>
</feature>
<feature type="binding site" evidence="8 9 10">
    <location>
        <begin position="56"/>
        <end position="60"/>
    </location>
    <ligand>
        <name>FMN</name>
        <dbReference type="ChEBI" id="CHEBI:58210"/>
    </ligand>
</feature>
<feature type="binding site" evidence="8 9 10">
    <location>
        <position position="90"/>
    </location>
    <ligand>
        <name>FMN</name>
        <dbReference type="ChEBI" id="CHEBI:58210"/>
    </ligand>
</feature>
<feature type="binding site" evidence="8 9 10">
    <location>
        <begin position="94"/>
        <end position="99"/>
    </location>
    <ligand>
        <name>FMN</name>
        <dbReference type="ChEBI" id="CHEBI:58210"/>
    </ligand>
</feature>
<feature type="binding site" evidence="8 9">
    <location>
        <position position="147"/>
    </location>
    <ligand>
        <name>FMN</name>
        <dbReference type="ChEBI" id="CHEBI:58210"/>
    </ligand>
</feature>
<feature type="strand" evidence="11">
    <location>
        <begin position="4"/>
        <end position="8"/>
    </location>
</feature>
<feature type="strand" evidence="11">
    <location>
        <begin position="11"/>
        <end position="13"/>
    </location>
</feature>
<feature type="helix" evidence="11">
    <location>
        <begin position="14"/>
        <end position="26"/>
    </location>
</feature>
<feature type="turn" evidence="11">
    <location>
        <begin position="28"/>
        <end position="30"/>
    </location>
</feature>
<feature type="strand" evidence="11">
    <location>
        <begin position="31"/>
        <end position="35"/>
    </location>
</feature>
<feature type="helix" evidence="11">
    <location>
        <begin position="36"/>
        <end position="38"/>
    </location>
</feature>
<feature type="helix" evidence="11">
    <location>
        <begin position="41"/>
        <end position="45"/>
    </location>
</feature>
<feature type="strand" evidence="11">
    <location>
        <begin position="48"/>
        <end position="53"/>
    </location>
</feature>
<feature type="turn" evidence="11">
    <location>
        <begin position="58"/>
        <end position="60"/>
    </location>
</feature>
<feature type="helix" evidence="11">
    <location>
        <begin position="64"/>
        <end position="73"/>
    </location>
</feature>
<feature type="strand" evidence="11">
    <location>
        <begin position="82"/>
        <end position="88"/>
    </location>
</feature>
<feature type="turn" evidence="11">
    <location>
        <begin position="91"/>
        <end position="96"/>
    </location>
</feature>
<feature type="helix" evidence="11">
    <location>
        <begin position="100"/>
        <end position="109"/>
    </location>
</feature>
<feature type="turn" evidence="11">
    <location>
        <begin position="110"/>
        <end position="113"/>
    </location>
</feature>
<feature type="strand" evidence="12">
    <location>
        <begin position="114"/>
        <end position="117"/>
    </location>
</feature>
<feature type="strand" evidence="11">
    <location>
        <begin position="133"/>
        <end position="135"/>
    </location>
</feature>
<feature type="strand" evidence="11">
    <location>
        <begin position="138"/>
        <end position="144"/>
    </location>
</feature>
<feature type="turn" evidence="11">
    <location>
        <begin position="146"/>
        <end position="148"/>
    </location>
</feature>
<feature type="turn" evidence="11">
    <location>
        <begin position="150"/>
        <end position="152"/>
    </location>
</feature>
<feature type="helix" evidence="11">
    <location>
        <begin position="153"/>
        <end position="168"/>
    </location>
</feature>
<feature type="helix" evidence="11">
    <location>
        <begin position="170"/>
        <end position="173"/>
    </location>
</feature>